<dbReference type="EC" id="2.5.1.78" evidence="1"/>
<dbReference type="EMBL" id="CP001364">
    <property type="protein sequence ID" value="ACM53767.1"/>
    <property type="molecule type" value="Genomic_DNA"/>
</dbReference>
<dbReference type="SMR" id="B9LIH3"/>
<dbReference type="KEGG" id="chl:Chy400_2373"/>
<dbReference type="HOGENOM" id="CLU_089358_1_1_0"/>
<dbReference type="OrthoDB" id="9809709at2"/>
<dbReference type="UniPathway" id="UPA00275">
    <property type="reaction ID" value="UER00404"/>
</dbReference>
<dbReference type="GO" id="GO:0005829">
    <property type="term" value="C:cytosol"/>
    <property type="evidence" value="ECO:0007669"/>
    <property type="project" value="TreeGrafter"/>
</dbReference>
<dbReference type="GO" id="GO:0009349">
    <property type="term" value="C:riboflavin synthase complex"/>
    <property type="evidence" value="ECO:0007669"/>
    <property type="project" value="InterPro"/>
</dbReference>
<dbReference type="GO" id="GO:0000906">
    <property type="term" value="F:6,7-dimethyl-8-ribityllumazine synthase activity"/>
    <property type="evidence" value="ECO:0007669"/>
    <property type="project" value="UniProtKB-UniRule"/>
</dbReference>
<dbReference type="GO" id="GO:0009231">
    <property type="term" value="P:riboflavin biosynthetic process"/>
    <property type="evidence" value="ECO:0007669"/>
    <property type="project" value="UniProtKB-UniRule"/>
</dbReference>
<dbReference type="CDD" id="cd09209">
    <property type="entry name" value="Lumazine_synthase-I"/>
    <property type="match status" value="1"/>
</dbReference>
<dbReference type="FunFam" id="3.40.50.960:FF:000001">
    <property type="entry name" value="6,7-dimethyl-8-ribityllumazine synthase"/>
    <property type="match status" value="1"/>
</dbReference>
<dbReference type="Gene3D" id="3.40.50.960">
    <property type="entry name" value="Lumazine/riboflavin synthase"/>
    <property type="match status" value="1"/>
</dbReference>
<dbReference type="HAMAP" id="MF_00178">
    <property type="entry name" value="Lumazine_synth"/>
    <property type="match status" value="1"/>
</dbReference>
<dbReference type="InterPro" id="IPR034964">
    <property type="entry name" value="LS"/>
</dbReference>
<dbReference type="InterPro" id="IPR002180">
    <property type="entry name" value="LS/RS"/>
</dbReference>
<dbReference type="InterPro" id="IPR036467">
    <property type="entry name" value="LS/RS_sf"/>
</dbReference>
<dbReference type="NCBIfam" id="TIGR00114">
    <property type="entry name" value="lumazine-synth"/>
    <property type="match status" value="1"/>
</dbReference>
<dbReference type="NCBIfam" id="NF000812">
    <property type="entry name" value="PRK00061.1-4"/>
    <property type="match status" value="1"/>
</dbReference>
<dbReference type="PANTHER" id="PTHR21058:SF0">
    <property type="entry name" value="6,7-DIMETHYL-8-RIBITYLLUMAZINE SYNTHASE"/>
    <property type="match status" value="1"/>
</dbReference>
<dbReference type="PANTHER" id="PTHR21058">
    <property type="entry name" value="6,7-DIMETHYL-8-RIBITYLLUMAZINE SYNTHASE DMRL SYNTHASE LUMAZINE SYNTHASE"/>
    <property type="match status" value="1"/>
</dbReference>
<dbReference type="Pfam" id="PF00885">
    <property type="entry name" value="DMRL_synthase"/>
    <property type="match status" value="1"/>
</dbReference>
<dbReference type="SUPFAM" id="SSF52121">
    <property type="entry name" value="Lumazine synthase"/>
    <property type="match status" value="1"/>
</dbReference>
<gene>
    <name evidence="1" type="primary">ribH</name>
    <name type="ordered locus">Chy400_2373</name>
</gene>
<sequence length="155" mass="16401">MTIYEGTYIGSGLRIAIVVSRWNDLITNRLLEGARDGLLRHGVAADHIDIAWVPGSFELPLVCHRLAESSRYDAIIALGAVIRGATTHHEHVAAAASSGIAQVSLQTGVPCIFGVITTDNIEQAIERAGTKAGNKGFEAATAAIEMATLLQRLNG</sequence>
<reference key="1">
    <citation type="submission" date="2009-01" db="EMBL/GenBank/DDBJ databases">
        <title>Complete sequence of Chloroflexus sp. Y-400-fl.</title>
        <authorList>
            <consortium name="US DOE Joint Genome Institute"/>
            <person name="Lucas S."/>
            <person name="Copeland A."/>
            <person name="Lapidus A."/>
            <person name="Glavina del Rio T."/>
            <person name="Dalin E."/>
            <person name="Tice H."/>
            <person name="Bruce D."/>
            <person name="Goodwin L."/>
            <person name="Pitluck S."/>
            <person name="Sims D."/>
            <person name="Kiss H."/>
            <person name="Brettin T."/>
            <person name="Detter J.C."/>
            <person name="Han C."/>
            <person name="Larimer F."/>
            <person name="Land M."/>
            <person name="Hauser L."/>
            <person name="Kyrpides N."/>
            <person name="Ovchinnikova G."/>
            <person name="Bryant D.A."/>
            <person name="Richardson P."/>
        </authorList>
    </citation>
    <scope>NUCLEOTIDE SEQUENCE [LARGE SCALE GENOMIC DNA]</scope>
    <source>
        <strain>ATCC 29364 / DSM 637 / Y-400-fl</strain>
    </source>
</reference>
<comment type="function">
    <text evidence="1">Catalyzes the formation of 6,7-dimethyl-8-ribityllumazine by condensation of 5-amino-6-(D-ribitylamino)uracil with 3,4-dihydroxy-2-butanone 4-phosphate. This is the penultimate step in the biosynthesis of riboflavin.</text>
</comment>
<comment type="catalytic activity">
    <reaction evidence="1">
        <text>(2S)-2-hydroxy-3-oxobutyl phosphate + 5-amino-6-(D-ribitylamino)uracil = 6,7-dimethyl-8-(1-D-ribityl)lumazine + phosphate + 2 H2O + H(+)</text>
        <dbReference type="Rhea" id="RHEA:26152"/>
        <dbReference type="ChEBI" id="CHEBI:15377"/>
        <dbReference type="ChEBI" id="CHEBI:15378"/>
        <dbReference type="ChEBI" id="CHEBI:15934"/>
        <dbReference type="ChEBI" id="CHEBI:43474"/>
        <dbReference type="ChEBI" id="CHEBI:58201"/>
        <dbReference type="ChEBI" id="CHEBI:58830"/>
        <dbReference type="EC" id="2.5.1.78"/>
    </reaction>
</comment>
<comment type="pathway">
    <text evidence="1">Cofactor biosynthesis; riboflavin biosynthesis; riboflavin from 2-hydroxy-3-oxobutyl phosphate and 5-amino-6-(D-ribitylamino)uracil: step 1/2.</text>
</comment>
<comment type="similarity">
    <text evidence="1">Belongs to the DMRL synthase family.</text>
</comment>
<keyword id="KW-0686">Riboflavin biosynthesis</keyword>
<keyword id="KW-0808">Transferase</keyword>
<accession>B9LIH3</accession>
<protein>
    <recommendedName>
        <fullName evidence="1">6,7-dimethyl-8-ribityllumazine synthase</fullName>
        <shortName evidence="1">DMRL synthase</shortName>
        <shortName evidence="1">LS</shortName>
        <shortName evidence="1">Lumazine synthase</shortName>
        <ecNumber evidence="1">2.5.1.78</ecNumber>
    </recommendedName>
</protein>
<feature type="chain" id="PRO_1000195469" description="6,7-dimethyl-8-ribityllumazine synthase">
    <location>
        <begin position="1"/>
        <end position="155"/>
    </location>
</feature>
<feature type="active site" description="Proton donor" evidence="1">
    <location>
        <position position="88"/>
    </location>
</feature>
<feature type="binding site" evidence="1">
    <location>
        <position position="22"/>
    </location>
    <ligand>
        <name>5-amino-6-(D-ribitylamino)uracil</name>
        <dbReference type="ChEBI" id="CHEBI:15934"/>
    </ligand>
</feature>
<feature type="binding site" evidence="1">
    <location>
        <begin position="56"/>
        <end position="58"/>
    </location>
    <ligand>
        <name>5-amino-6-(D-ribitylamino)uracil</name>
        <dbReference type="ChEBI" id="CHEBI:15934"/>
    </ligand>
</feature>
<feature type="binding site" evidence="1">
    <location>
        <begin position="80"/>
        <end position="82"/>
    </location>
    <ligand>
        <name>5-amino-6-(D-ribitylamino)uracil</name>
        <dbReference type="ChEBI" id="CHEBI:15934"/>
    </ligand>
</feature>
<feature type="binding site" evidence="1">
    <location>
        <begin position="85"/>
        <end position="86"/>
    </location>
    <ligand>
        <name>(2S)-2-hydroxy-3-oxobutyl phosphate</name>
        <dbReference type="ChEBI" id="CHEBI:58830"/>
    </ligand>
</feature>
<feature type="binding site" evidence="1">
    <location>
        <position position="113"/>
    </location>
    <ligand>
        <name>5-amino-6-(D-ribitylamino)uracil</name>
        <dbReference type="ChEBI" id="CHEBI:15934"/>
    </ligand>
</feature>
<feature type="binding site" evidence="1">
    <location>
        <position position="127"/>
    </location>
    <ligand>
        <name>(2S)-2-hydroxy-3-oxobutyl phosphate</name>
        <dbReference type="ChEBI" id="CHEBI:58830"/>
    </ligand>
</feature>
<organism>
    <name type="scientific">Chloroflexus aurantiacus (strain ATCC 29364 / DSM 637 / Y-400-fl)</name>
    <dbReference type="NCBI Taxonomy" id="480224"/>
    <lineage>
        <taxon>Bacteria</taxon>
        <taxon>Bacillati</taxon>
        <taxon>Chloroflexota</taxon>
        <taxon>Chloroflexia</taxon>
        <taxon>Chloroflexales</taxon>
        <taxon>Chloroflexineae</taxon>
        <taxon>Chloroflexaceae</taxon>
        <taxon>Chloroflexus</taxon>
    </lineage>
</organism>
<evidence type="ECO:0000255" key="1">
    <source>
        <dbReference type="HAMAP-Rule" id="MF_00178"/>
    </source>
</evidence>
<name>RISB_CHLSY</name>
<proteinExistence type="inferred from homology"/>